<proteinExistence type="inferred from homology"/>
<accession>Q54MK0</accession>
<dbReference type="EMBL" id="AAFI02000082">
    <property type="protein sequence ID" value="EAL64482.1"/>
    <property type="molecule type" value="Genomic_DNA"/>
</dbReference>
<dbReference type="RefSeq" id="XP_637990.1">
    <property type="nucleotide sequence ID" value="XM_632898.1"/>
</dbReference>
<dbReference type="FunCoup" id="Q54MK0">
    <property type="interactions" value="82"/>
</dbReference>
<dbReference type="PaxDb" id="44689-DDB0220633"/>
<dbReference type="EnsemblProtists" id="EAL64482">
    <property type="protein sequence ID" value="EAL64482"/>
    <property type="gene ID" value="DDB_G0285895"/>
</dbReference>
<dbReference type="GeneID" id="8625341"/>
<dbReference type="KEGG" id="ddi:DDB_G0285895"/>
<dbReference type="dictyBase" id="DDB_G0285895">
    <property type="gene designation" value="gdt5"/>
</dbReference>
<dbReference type="VEuPathDB" id="AmoebaDB:DDB_G0285895"/>
<dbReference type="HOGENOM" id="CLU_273574_0_0_1"/>
<dbReference type="InParanoid" id="Q54MK0"/>
<dbReference type="PhylomeDB" id="Q54MK0"/>
<dbReference type="PRO" id="PR:Q54MK0"/>
<dbReference type="Proteomes" id="UP000002195">
    <property type="component" value="Chromosome 4"/>
</dbReference>
<dbReference type="GO" id="GO:0016020">
    <property type="term" value="C:membrane"/>
    <property type="evidence" value="ECO:0007669"/>
    <property type="project" value="UniProtKB-SubCell"/>
</dbReference>
<dbReference type="GO" id="GO:0050793">
    <property type="term" value="P:regulation of developmental process"/>
    <property type="evidence" value="ECO:0000318"/>
    <property type="project" value="GO_Central"/>
</dbReference>
<dbReference type="InterPro" id="IPR052015">
    <property type="entry name" value="GDT_regulator"/>
</dbReference>
<dbReference type="InterPro" id="IPR026237">
    <property type="entry name" value="STKINASEGDT"/>
</dbReference>
<dbReference type="PANTHER" id="PTHR47774">
    <property type="entry name" value="GROWTH-DIFFERENTIATION TRANSITION PROTEIN 5-RELATED"/>
    <property type="match status" value="1"/>
</dbReference>
<dbReference type="PANTHER" id="PTHR47774:SF1">
    <property type="entry name" value="GROWTH-DIFFERENTIATION TRANSITION PROTEIN 5-RELATED"/>
    <property type="match status" value="1"/>
</dbReference>
<dbReference type="PRINTS" id="PR02079">
    <property type="entry name" value="STKINASEGDT"/>
</dbReference>
<name>GDT5_DICDI</name>
<sequence>MKNNFFKKTIILLIFLSIFILYSNADEETITTPPGYYGLKRIKRFPHSNIESNNISQTDADLYYPDICAGALPNAEGDLMTFYTFLDANLTLNKFLITKESIYSFMVHSLVILPGGSVTIKRGLLFFSLEEYNSLNIINPAKFPLDPMGYFPGILALGGSLTLIGNYPLIYSAQVLSKTTLRISPPFSSIPGDNINKLYQIKIFSDSNPLGSLCSIIMDSTRTIVNISGCPPIGNEKVMKVAFIKFTIDEMNTGISNRYSVKKIDESIGASIFITGDTKVHIENFFINGDGRTLNEEYNDHKLIFSPNNKNIVTDIIKGSNQRYRNSLYIEFSNNAVIKNCVIFEKDPRRSPIVFFASNVEFTSNIISSYSGSNLIAQFGTENIRSKNNHYFLVPYSRSLNTSAKSMDYGYEGGNGLYSLSPNIKSENDTFIGQLNIFNFNFISNRSSVTSFDRDCYAPCYNDSDSVLSSVQRPVDFYLINPKYFKISNITLFNSTIFNLFVANSNGNQPNTYTINGLVAIGPIVANLDSNFLILKDFIATENFKLDGSVKRLDIINSSIELPLTSKDIIKNVSSLSTNIQNSYLYYPSNDSVEQLKDQIYGSVITPYYYSSPITLDRIKIVSIYPNSPLQVISGLTFNIVIQFRLIYAFQDIIICIFTSDNDSIQNRTVDFNVLSNKCILPVSVGPNKEGSANVRVQIKNSLSSDYLYIIDFPQITVLKTYTFYSGWSMANPDLANQQFIVNGSLFQSGCQTKTDSNCTISENSNYVPNLPNVTSSDELNSLFSSGVTSLNSNEPVIITTAINSNSTISQIQLFFTHVPIDQHASLLSVYIDNQPVYVLEPLQSNQGPTFKNITFKYENTNSLEKINIAFTTRGDIYLTSMAIYSSNIFFIPPIIPDPTAIPDVPANENTLNLLTIVLPICSAVVVASSVMLGRLFYKKKFKKFKSADIENEMTTIEPIETSNSNIENKSESIATPQQRNEQKEIPNKIHPVLKSLVKPKIAPYTLISPLPPLETKTPEALNPHFNEIGCDPINENPEINSDEQIVLPVDTPQISPDSPQHSIPSSSPPPPPLPLPPSTSLKPLKLPIVDSFRTSSFMFRLERSNLIELSDPNNPLRFSSKILDFNLKGLKATLFKEYSNFLLISNISSSTIFVKVILPRDSRTGNVGYNVHEYF</sequence>
<organism>
    <name type="scientific">Dictyostelium discoideum</name>
    <name type="common">Social amoeba</name>
    <dbReference type="NCBI Taxonomy" id="44689"/>
    <lineage>
        <taxon>Eukaryota</taxon>
        <taxon>Amoebozoa</taxon>
        <taxon>Evosea</taxon>
        <taxon>Eumycetozoa</taxon>
        <taxon>Dictyostelia</taxon>
        <taxon>Dictyosteliales</taxon>
        <taxon>Dictyosteliaceae</taxon>
        <taxon>Dictyostelium</taxon>
    </lineage>
</organism>
<gene>
    <name type="primary">gdt5</name>
    <name type="ORF">DDB_G0285895</name>
</gene>
<evidence type="ECO:0000255" key="1"/>
<evidence type="ECO:0000256" key="2">
    <source>
        <dbReference type="SAM" id="MobiDB-lite"/>
    </source>
</evidence>
<evidence type="ECO:0000305" key="3"/>
<reference key="1">
    <citation type="journal article" date="2005" name="Nature">
        <title>The genome of the social amoeba Dictyostelium discoideum.</title>
        <authorList>
            <person name="Eichinger L."/>
            <person name="Pachebat J.A."/>
            <person name="Gloeckner G."/>
            <person name="Rajandream M.A."/>
            <person name="Sucgang R."/>
            <person name="Berriman M."/>
            <person name="Song J."/>
            <person name="Olsen R."/>
            <person name="Szafranski K."/>
            <person name="Xu Q."/>
            <person name="Tunggal B."/>
            <person name="Kummerfeld S."/>
            <person name="Madera M."/>
            <person name="Konfortov B.A."/>
            <person name="Rivero F."/>
            <person name="Bankier A.T."/>
            <person name="Lehmann R."/>
            <person name="Hamlin N."/>
            <person name="Davies R."/>
            <person name="Gaudet P."/>
            <person name="Fey P."/>
            <person name="Pilcher K."/>
            <person name="Chen G."/>
            <person name="Saunders D."/>
            <person name="Sodergren E.J."/>
            <person name="Davis P."/>
            <person name="Kerhornou A."/>
            <person name="Nie X."/>
            <person name="Hall N."/>
            <person name="Anjard C."/>
            <person name="Hemphill L."/>
            <person name="Bason N."/>
            <person name="Farbrother P."/>
            <person name="Desany B."/>
            <person name="Just E."/>
            <person name="Morio T."/>
            <person name="Rost R."/>
            <person name="Churcher C.M."/>
            <person name="Cooper J."/>
            <person name="Haydock S."/>
            <person name="van Driessche N."/>
            <person name="Cronin A."/>
            <person name="Goodhead I."/>
            <person name="Muzny D.M."/>
            <person name="Mourier T."/>
            <person name="Pain A."/>
            <person name="Lu M."/>
            <person name="Harper D."/>
            <person name="Lindsay R."/>
            <person name="Hauser H."/>
            <person name="James K.D."/>
            <person name="Quiles M."/>
            <person name="Madan Babu M."/>
            <person name="Saito T."/>
            <person name="Buchrieser C."/>
            <person name="Wardroper A."/>
            <person name="Felder M."/>
            <person name="Thangavelu M."/>
            <person name="Johnson D."/>
            <person name="Knights A."/>
            <person name="Loulseged H."/>
            <person name="Mungall K.L."/>
            <person name="Oliver K."/>
            <person name="Price C."/>
            <person name="Quail M.A."/>
            <person name="Urushihara H."/>
            <person name="Hernandez J."/>
            <person name="Rabbinowitsch E."/>
            <person name="Steffen D."/>
            <person name="Sanders M."/>
            <person name="Ma J."/>
            <person name="Kohara Y."/>
            <person name="Sharp S."/>
            <person name="Simmonds M.N."/>
            <person name="Spiegler S."/>
            <person name="Tivey A."/>
            <person name="Sugano S."/>
            <person name="White B."/>
            <person name="Walker D."/>
            <person name="Woodward J.R."/>
            <person name="Winckler T."/>
            <person name="Tanaka Y."/>
            <person name="Shaulsky G."/>
            <person name="Schleicher M."/>
            <person name="Weinstock G.M."/>
            <person name="Rosenthal A."/>
            <person name="Cox E.C."/>
            <person name="Chisholm R.L."/>
            <person name="Gibbs R.A."/>
            <person name="Loomis W.F."/>
            <person name="Platzer M."/>
            <person name="Kay R.R."/>
            <person name="Williams J.G."/>
            <person name="Dear P.H."/>
            <person name="Noegel A.A."/>
            <person name="Barrell B.G."/>
            <person name="Kuspa A."/>
        </authorList>
    </citation>
    <scope>NUCLEOTIDE SEQUENCE [LARGE SCALE GENOMIC DNA]</scope>
    <source>
        <strain>AX4</strain>
    </source>
</reference>
<reference key="2">
    <citation type="journal article" date="2004" name="BMC Dev. Biol.">
        <title>Gdt2 regulates the transition of Dictyostelium cells from growth to differentiation.</title>
        <authorList>
            <person name="Chibalina M.V."/>
            <person name="Anjard C."/>
            <person name="Insall R.H."/>
        </authorList>
    </citation>
    <scope>IDENTIFICATION</scope>
    <scope>NOMENCLATURE</scope>
</reference>
<comment type="subcellular location">
    <subcellularLocation>
        <location evidence="3">Membrane</location>
        <topology evidence="3">Single-pass type I membrane protein</topology>
    </subcellularLocation>
</comment>
<comment type="similarity">
    <text evidence="3">Belongs to the GDT family.</text>
</comment>
<keyword id="KW-0472">Membrane</keyword>
<keyword id="KW-1185">Reference proteome</keyword>
<keyword id="KW-0732">Signal</keyword>
<keyword id="KW-0812">Transmembrane</keyword>
<keyword id="KW-1133">Transmembrane helix</keyword>
<protein>
    <recommendedName>
        <fullName>Growth-differentiation transition protein 5</fullName>
    </recommendedName>
</protein>
<feature type="signal peptide" evidence="1">
    <location>
        <begin position="1"/>
        <end position="25"/>
    </location>
</feature>
<feature type="chain" id="PRO_0000323582" description="Growth-differentiation transition protein 5">
    <location>
        <begin position="26"/>
        <end position="1176"/>
    </location>
</feature>
<feature type="topological domain" description="Extracellular" evidence="1">
    <location>
        <begin position="26"/>
        <end position="913"/>
    </location>
</feature>
<feature type="transmembrane region" description="Helical" evidence="1">
    <location>
        <begin position="914"/>
        <end position="934"/>
    </location>
</feature>
<feature type="topological domain" description="Cytoplasmic" evidence="1">
    <location>
        <begin position="935"/>
        <end position="1176"/>
    </location>
</feature>
<feature type="region of interest" description="Disordered" evidence="2">
    <location>
        <begin position="965"/>
        <end position="985"/>
    </location>
</feature>
<feature type="region of interest" description="Disordered" evidence="2">
    <location>
        <begin position="1050"/>
        <end position="1080"/>
    </location>
</feature>
<feature type="compositionally biased region" description="Low complexity" evidence="2">
    <location>
        <begin position="965"/>
        <end position="974"/>
    </location>
</feature>
<feature type="compositionally biased region" description="Low complexity" evidence="2">
    <location>
        <begin position="1053"/>
        <end position="1066"/>
    </location>
</feature>
<feature type="compositionally biased region" description="Pro residues" evidence="2">
    <location>
        <begin position="1067"/>
        <end position="1078"/>
    </location>
</feature>